<protein>
    <recommendedName>
        <fullName evidence="1">Non-structural protein 1</fullName>
        <shortName evidence="1">NS1</shortName>
    </recommendedName>
    <alternativeName>
        <fullName evidence="1">NS1A</fullName>
    </alternativeName>
</protein>
<name>NS1_I49A0</name>
<organism>
    <name type="scientific">Influenza A virus (strain A/Chicken/Germany/n/1949 H10N7)</name>
    <dbReference type="NCBI Taxonomy" id="11339"/>
    <lineage>
        <taxon>Viruses</taxon>
        <taxon>Riboviria</taxon>
        <taxon>Orthornavirae</taxon>
        <taxon>Negarnaviricota</taxon>
        <taxon>Polyploviricotina</taxon>
        <taxon>Insthoviricetes</taxon>
        <taxon>Articulavirales</taxon>
        <taxon>Orthomyxoviridae</taxon>
        <taxon>Alphainfluenzavirus</taxon>
        <taxon>Alphainfluenzavirus influenzae</taxon>
        <taxon>Influenza A virus</taxon>
    </lineage>
</organism>
<sequence>MDSNTITSFQVDCYLWHIRKLLSMRDMCDAPFDDRLRRDQKALKGRGSTLGLDLRVATMEGKKIVEDILESETDENLKIAIASSPAPRYIMDMSIEEISREWYMLMPRQKVTGGLMVKMDQAIMGKRIILKANFSVLFDQLETLVSLRAFTEDGAIVAVISPIPSMPGHSTEDVKNAIGILIGGLEWNDNSIRASENIQRFAWGIRDEDGGPPLPPKQKRYMARRIESEV</sequence>
<organismHost>
    <name type="scientific">Aves</name>
    <dbReference type="NCBI Taxonomy" id="8782"/>
</organismHost>
<accession>P30909</accession>
<evidence type="ECO:0000255" key="1">
    <source>
        <dbReference type="HAMAP-Rule" id="MF_04066"/>
    </source>
</evidence>
<proteinExistence type="inferred from homology"/>
<gene>
    <name evidence="1" type="primary">NS</name>
</gene>
<reference key="1">
    <citation type="journal article" date="1991" name="Virology">
        <title>Phylogenetic relationship of the nonstructural (NS) genes of influenza A viruses.</title>
        <authorList>
            <person name="Ludwig S."/>
            <person name="Schultz U."/>
            <person name="Mandler J."/>
            <person name="Fitch W.M."/>
            <person name="Scholtissek C."/>
        </authorList>
    </citation>
    <scope>NUCLEOTIDE SEQUENCE [GENOMIC RNA]</scope>
</reference>
<reference key="2">
    <citation type="journal article" date="2003" name="Virology">
        <title>Intracellular warfare between human influenza viruses and human cells: the roles of the viral NS1 protein.</title>
        <authorList>
            <person name="Krug R.M."/>
            <person name="Yuan W."/>
            <person name="Noah D.L."/>
            <person name="Latham A.G."/>
        </authorList>
    </citation>
    <scope>REVIEW</scope>
</reference>
<dbReference type="EMBL" id="M55464">
    <property type="protein sequence ID" value="AAA43121.1"/>
    <property type="molecule type" value="Genomic_RNA"/>
</dbReference>
<dbReference type="SMR" id="P30909"/>
<dbReference type="GO" id="GO:0030430">
    <property type="term" value="C:host cell cytoplasm"/>
    <property type="evidence" value="ECO:0007669"/>
    <property type="project" value="UniProtKB-SubCell"/>
</dbReference>
<dbReference type="GO" id="GO:0042025">
    <property type="term" value="C:host cell nucleus"/>
    <property type="evidence" value="ECO:0007669"/>
    <property type="project" value="UniProtKB-SubCell"/>
</dbReference>
<dbReference type="GO" id="GO:0030291">
    <property type="term" value="F:protein serine/threonine kinase inhibitor activity"/>
    <property type="evidence" value="ECO:0007669"/>
    <property type="project" value="UniProtKB-KW"/>
</dbReference>
<dbReference type="GO" id="GO:0003723">
    <property type="term" value="F:RNA binding"/>
    <property type="evidence" value="ECO:0007669"/>
    <property type="project" value="UniProtKB-KW"/>
</dbReference>
<dbReference type="GO" id="GO:0039540">
    <property type="term" value="P:symbiont-mediated suppression of host cytoplasmic pattern recognition receptor signaling pathway via inhibition of RIG-I activity"/>
    <property type="evidence" value="ECO:0007669"/>
    <property type="project" value="UniProtKB-KW"/>
</dbReference>
<dbReference type="GO" id="GO:0039657">
    <property type="term" value="P:symbiont-mediated suppression of host gene expression"/>
    <property type="evidence" value="ECO:0007669"/>
    <property type="project" value="UniProtKB-KW"/>
</dbReference>
<dbReference type="GO" id="GO:0039524">
    <property type="term" value="P:symbiont-mediated suppression of host mRNA processing"/>
    <property type="evidence" value="ECO:0007669"/>
    <property type="project" value="UniProtKB-KW"/>
</dbReference>
<dbReference type="GO" id="GO:0039580">
    <property type="term" value="P:symbiont-mediated suppression of host PKR/eIFalpha signaling"/>
    <property type="evidence" value="ECO:0007669"/>
    <property type="project" value="UniProtKB-KW"/>
</dbReference>
<dbReference type="GO" id="GO:0039502">
    <property type="term" value="P:symbiont-mediated suppression of host type I interferon-mediated signaling pathway"/>
    <property type="evidence" value="ECO:0007669"/>
    <property type="project" value="UniProtKB-KW"/>
</dbReference>
<dbReference type="Gene3D" id="3.30.420.330">
    <property type="entry name" value="Influenza virus non-structural protein, effector domain"/>
    <property type="match status" value="1"/>
</dbReference>
<dbReference type="Gene3D" id="1.10.287.10">
    <property type="entry name" value="S15/NS1, RNA-binding"/>
    <property type="match status" value="1"/>
</dbReference>
<dbReference type="HAMAP" id="MF_04066">
    <property type="entry name" value="INFV_NS1"/>
    <property type="match status" value="1"/>
</dbReference>
<dbReference type="InterPro" id="IPR004208">
    <property type="entry name" value="NS1"/>
</dbReference>
<dbReference type="InterPro" id="IPR000256">
    <property type="entry name" value="NS1A"/>
</dbReference>
<dbReference type="InterPro" id="IPR038064">
    <property type="entry name" value="NS1A_effect_dom-like_sf"/>
</dbReference>
<dbReference type="InterPro" id="IPR009068">
    <property type="entry name" value="uS15_NS1_RNA-bd_sf"/>
</dbReference>
<dbReference type="Pfam" id="PF00600">
    <property type="entry name" value="Flu_NS1"/>
    <property type="match status" value="1"/>
</dbReference>
<dbReference type="SUPFAM" id="SSF143021">
    <property type="entry name" value="Ns1 effector domain-like"/>
    <property type="match status" value="1"/>
</dbReference>
<dbReference type="SUPFAM" id="SSF47060">
    <property type="entry name" value="S15/NS1 RNA-binding domain"/>
    <property type="match status" value="1"/>
</dbReference>
<keyword id="KW-0025">Alternative splicing</keyword>
<keyword id="KW-1262">Eukaryotic host gene expression shutoff by virus</keyword>
<keyword id="KW-1035">Host cytoplasm</keyword>
<keyword id="KW-1190">Host gene expression shutoff by virus</keyword>
<keyword id="KW-1192">Host mRNA suppression by virus</keyword>
<keyword id="KW-1048">Host nucleus</keyword>
<keyword id="KW-0945">Host-virus interaction</keyword>
<keyword id="KW-1090">Inhibition of host innate immune response by virus</keyword>
<keyword id="KW-1114">Inhibition of host interferon signaling pathway by virus</keyword>
<keyword id="KW-1102">Inhibition of host PKR by virus</keyword>
<keyword id="KW-1103">Inhibition of host pre-mRNA processing by virus</keyword>
<keyword id="KW-1088">Inhibition of host RIG-I by virus</keyword>
<keyword id="KW-1113">Inhibition of host RLR pathway by virus</keyword>
<keyword id="KW-0922">Interferon antiviral system evasion</keyword>
<keyword id="KW-0694">RNA-binding</keyword>
<keyword id="KW-0832">Ubl conjugation</keyword>
<keyword id="KW-0899">Viral immunoevasion</keyword>
<feature type="chain" id="PRO_0000078922" description="Non-structural protein 1">
    <location>
        <begin position="1"/>
        <end position="230"/>
    </location>
</feature>
<feature type="region of interest" description="RNA-binding and homodimerization" evidence="1">
    <location>
        <begin position="1"/>
        <end position="73"/>
    </location>
</feature>
<feature type="region of interest" description="CPSF4-binding" evidence="1">
    <location>
        <begin position="180"/>
        <end position="215"/>
    </location>
</feature>
<feature type="region of interest" description="PABPN1-binding" evidence="1">
    <location>
        <begin position="223"/>
        <end position="230"/>
    </location>
</feature>
<feature type="short sequence motif" description="Nuclear localization signal" evidence="1">
    <location>
        <begin position="34"/>
        <end position="38"/>
    </location>
</feature>
<feature type="short sequence motif" description="Nuclear export signal" evidence="1">
    <location>
        <begin position="137"/>
        <end position="146"/>
    </location>
</feature>
<comment type="function">
    <text evidence="1">Inhibits post-transcriptional processing of cellular pre-mRNA, by binding and inhibiting two cellular proteins that are required for the 3'-end processing of cellular pre-mRNAs: the 30 kDa cleavage and polyadenylation specificity factor/CPSF4 and the poly(A)-binding protein 2/PABPN1. In turn, unprocessed 3' end pre-mRNAs accumulate in the host nucleus and are no longer exported to the cytoplasm. Cellular protein synthesis is thereby shut off very early after virus infection. Viral protein synthesis is not affected by the inhibition of the cellular 3' end processing machinery because the poly(A) tails of viral mRNAs are produced by the viral polymerase through a stuttering mechanism. Prevents the establishment of the cellular antiviral state by inhibiting TRIM25-mediated RIGI ubiquitination, which normally triggers the antiviral transduction signal that leads to the activation of type I IFN genes by transcription factors IRF3 and IRF7. Also binds poly(A) and U6 snRNA. Inhibits the integrated stress response (ISR) in the infected cell by blocking dsRNA binding by EIF2AK2/PKR and further phosphorylation of EIF2S1/EIF-2ALPHA. Stress granule formation is thus inhibited, which allows protein synthesis and viral replication.</text>
</comment>
<comment type="subunit">
    <text evidence="1">Homodimer. Interacts with host TRIM25 (via coiled coil); this interaction specifically inhibits TRIM25 multimerization and TRIM25-mediated RIGI CARD ubiquitination. Interacts with human EIF2AK2/PKR, CPSF4, IVNS1ABP and PABPN1.</text>
</comment>
<comment type="subcellular location">
    <subcellularLocation>
        <location evidence="1">Host nucleus</location>
    </subcellularLocation>
    <subcellularLocation>
        <location evidence="1">Host cytoplasm</location>
    </subcellularLocation>
    <text evidence="1">In uninfected, transfected cells, NS1 is localized in the nucleus. Only in virus infected cells, the nuclear export signal is unveiled, presumably by a viral protein, and a fraction of NS1 is exported in the cytoplasm.</text>
</comment>
<comment type="alternative products">
    <event type="alternative splicing"/>
    <isoform>
        <id>P30909-1</id>
        <name>NS1</name>
        <sequence type="displayed"/>
    </isoform>
    <isoform>
        <id>P30914-1</id>
        <name>NEP</name>
        <name>NS2</name>
        <sequence type="external"/>
    </isoform>
</comment>
<comment type="domain">
    <text evidence="1">The dsRNA-binding region is required for suppression of RNA silencing.</text>
</comment>
<comment type="PTM">
    <text evidence="1">Upon interferon induction, ISGylated via host HERC5; this results in the impairment of NS1 interaction with RNA targets due to its inability to form homodimers and to interact with host EIF2AK2/PKR.</text>
</comment>
<comment type="similarity">
    <text evidence="1">Belongs to the influenza A viruses NS1 family.</text>
</comment>